<name>SYS_RHIR8</name>
<sequence>MLDIKWIRENAEVLDAALAKRGAEPLSQGLIALDEKRRSIIQSVQDMQSRRNAASKEIGAAMAQKNTELAEKLKGEVADIKTSLPAAEEEERVLTAELNDALSRIPNIPLDDVPVGKDEHDNVVKHSWGAKPAWNHKPKEHYEIGEELGYMDFERAAKLSGSRFTVLTSQLARLERALGQFMLDLHTSEHGYTEVSSPLMVRDEAMFGTGQLPKFAEDSFRTTGGHWLIPTAEVTLTNLVSGDILDQEKLPLRFTALTPSFRSEAGSAGRDTRGMLRQHQFWKCELVSITDAESSIAEHERMTACAEEVLKRLGLHYRVMTLSTGDMGFGARKTYDLEVWLPGQDTYREISSCSVCGDFQARRMNARYRGKDDKGTKFVHTLNGSGTAVGRCLIAVLENYLNDDGSVTVPDALLPYMGGLKRIERAA</sequence>
<proteinExistence type="inferred from homology"/>
<feature type="chain" id="PRO_1000123862" description="Serine--tRNA ligase">
    <location>
        <begin position="1"/>
        <end position="427"/>
    </location>
</feature>
<feature type="binding site" evidence="1">
    <location>
        <begin position="231"/>
        <end position="233"/>
    </location>
    <ligand>
        <name>L-serine</name>
        <dbReference type="ChEBI" id="CHEBI:33384"/>
    </ligand>
</feature>
<feature type="binding site" evidence="1">
    <location>
        <begin position="262"/>
        <end position="264"/>
    </location>
    <ligand>
        <name>ATP</name>
        <dbReference type="ChEBI" id="CHEBI:30616"/>
    </ligand>
</feature>
<feature type="binding site" evidence="1">
    <location>
        <position position="285"/>
    </location>
    <ligand>
        <name>L-serine</name>
        <dbReference type="ChEBI" id="CHEBI:33384"/>
    </ligand>
</feature>
<feature type="binding site" evidence="1">
    <location>
        <begin position="349"/>
        <end position="352"/>
    </location>
    <ligand>
        <name>ATP</name>
        <dbReference type="ChEBI" id="CHEBI:30616"/>
    </ligand>
</feature>
<feature type="binding site" evidence="1">
    <location>
        <position position="385"/>
    </location>
    <ligand>
        <name>L-serine</name>
        <dbReference type="ChEBI" id="CHEBI:33384"/>
    </ligand>
</feature>
<dbReference type="EC" id="6.1.1.11" evidence="1"/>
<dbReference type="EMBL" id="CP000628">
    <property type="protein sequence ID" value="ACM26392.1"/>
    <property type="molecule type" value="Genomic_DNA"/>
</dbReference>
<dbReference type="RefSeq" id="WP_012651311.1">
    <property type="nucleotide sequence ID" value="NC_011985.1"/>
</dbReference>
<dbReference type="SMR" id="B9JEH1"/>
<dbReference type="STRING" id="311403.Arad_2130"/>
<dbReference type="GeneID" id="86848287"/>
<dbReference type="KEGG" id="ara:Arad_2130"/>
<dbReference type="eggNOG" id="COG0172">
    <property type="taxonomic scope" value="Bacteria"/>
</dbReference>
<dbReference type="HOGENOM" id="CLU_023797_1_1_5"/>
<dbReference type="UniPathway" id="UPA00906">
    <property type="reaction ID" value="UER00895"/>
</dbReference>
<dbReference type="Proteomes" id="UP000001600">
    <property type="component" value="Chromosome 1"/>
</dbReference>
<dbReference type="GO" id="GO:0005737">
    <property type="term" value="C:cytoplasm"/>
    <property type="evidence" value="ECO:0007669"/>
    <property type="project" value="UniProtKB-SubCell"/>
</dbReference>
<dbReference type="GO" id="GO:0005524">
    <property type="term" value="F:ATP binding"/>
    <property type="evidence" value="ECO:0007669"/>
    <property type="project" value="UniProtKB-UniRule"/>
</dbReference>
<dbReference type="GO" id="GO:0004828">
    <property type="term" value="F:serine-tRNA ligase activity"/>
    <property type="evidence" value="ECO:0007669"/>
    <property type="project" value="UniProtKB-UniRule"/>
</dbReference>
<dbReference type="GO" id="GO:0016260">
    <property type="term" value="P:selenocysteine biosynthetic process"/>
    <property type="evidence" value="ECO:0007669"/>
    <property type="project" value="UniProtKB-UniRule"/>
</dbReference>
<dbReference type="GO" id="GO:0006434">
    <property type="term" value="P:seryl-tRNA aminoacylation"/>
    <property type="evidence" value="ECO:0007669"/>
    <property type="project" value="UniProtKB-UniRule"/>
</dbReference>
<dbReference type="CDD" id="cd00770">
    <property type="entry name" value="SerRS_core"/>
    <property type="match status" value="1"/>
</dbReference>
<dbReference type="Gene3D" id="3.30.930.10">
    <property type="entry name" value="Bira Bifunctional Protein, Domain 2"/>
    <property type="match status" value="1"/>
</dbReference>
<dbReference type="Gene3D" id="1.10.287.40">
    <property type="entry name" value="Serine-tRNA synthetase, tRNA binding domain"/>
    <property type="match status" value="1"/>
</dbReference>
<dbReference type="HAMAP" id="MF_00176">
    <property type="entry name" value="Ser_tRNA_synth_type1"/>
    <property type="match status" value="1"/>
</dbReference>
<dbReference type="InterPro" id="IPR002314">
    <property type="entry name" value="aa-tRNA-synt_IIb"/>
</dbReference>
<dbReference type="InterPro" id="IPR006195">
    <property type="entry name" value="aa-tRNA-synth_II"/>
</dbReference>
<dbReference type="InterPro" id="IPR045864">
    <property type="entry name" value="aa-tRNA-synth_II/BPL/LPL"/>
</dbReference>
<dbReference type="InterPro" id="IPR002317">
    <property type="entry name" value="Ser-tRNA-ligase_type_1"/>
</dbReference>
<dbReference type="InterPro" id="IPR015866">
    <property type="entry name" value="Ser-tRNA-synth_1_N"/>
</dbReference>
<dbReference type="InterPro" id="IPR042103">
    <property type="entry name" value="SerRS_1_N_sf"/>
</dbReference>
<dbReference type="InterPro" id="IPR033729">
    <property type="entry name" value="SerRS_core"/>
</dbReference>
<dbReference type="InterPro" id="IPR010978">
    <property type="entry name" value="tRNA-bd_arm"/>
</dbReference>
<dbReference type="NCBIfam" id="TIGR00414">
    <property type="entry name" value="serS"/>
    <property type="match status" value="1"/>
</dbReference>
<dbReference type="PANTHER" id="PTHR43697:SF1">
    <property type="entry name" value="SERINE--TRNA LIGASE"/>
    <property type="match status" value="1"/>
</dbReference>
<dbReference type="PANTHER" id="PTHR43697">
    <property type="entry name" value="SERYL-TRNA SYNTHETASE"/>
    <property type="match status" value="1"/>
</dbReference>
<dbReference type="Pfam" id="PF02403">
    <property type="entry name" value="Seryl_tRNA_N"/>
    <property type="match status" value="1"/>
</dbReference>
<dbReference type="Pfam" id="PF00587">
    <property type="entry name" value="tRNA-synt_2b"/>
    <property type="match status" value="1"/>
</dbReference>
<dbReference type="PIRSF" id="PIRSF001529">
    <property type="entry name" value="Ser-tRNA-synth_IIa"/>
    <property type="match status" value="1"/>
</dbReference>
<dbReference type="PRINTS" id="PR00981">
    <property type="entry name" value="TRNASYNTHSER"/>
</dbReference>
<dbReference type="SUPFAM" id="SSF55681">
    <property type="entry name" value="Class II aaRS and biotin synthetases"/>
    <property type="match status" value="1"/>
</dbReference>
<dbReference type="SUPFAM" id="SSF46589">
    <property type="entry name" value="tRNA-binding arm"/>
    <property type="match status" value="1"/>
</dbReference>
<dbReference type="PROSITE" id="PS50862">
    <property type="entry name" value="AA_TRNA_LIGASE_II"/>
    <property type="match status" value="1"/>
</dbReference>
<protein>
    <recommendedName>
        <fullName evidence="1">Serine--tRNA ligase</fullName>
        <ecNumber evidence="1">6.1.1.11</ecNumber>
    </recommendedName>
    <alternativeName>
        <fullName evidence="1">Seryl-tRNA synthetase</fullName>
        <shortName evidence="1">SerRS</shortName>
    </alternativeName>
    <alternativeName>
        <fullName evidence="1">Seryl-tRNA(Ser/Sec) synthetase</fullName>
    </alternativeName>
</protein>
<comment type="function">
    <text evidence="1">Catalyzes the attachment of serine to tRNA(Ser). Is also able to aminoacylate tRNA(Sec) with serine, to form the misacylated tRNA L-seryl-tRNA(Sec), which will be further converted into selenocysteinyl-tRNA(Sec).</text>
</comment>
<comment type="catalytic activity">
    <reaction evidence="1">
        <text>tRNA(Ser) + L-serine + ATP = L-seryl-tRNA(Ser) + AMP + diphosphate + H(+)</text>
        <dbReference type="Rhea" id="RHEA:12292"/>
        <dbReference type="Rhea" id="RHEA-COMP:9669"/>
        <dbReference type="Rhea" id="RHEA-COMP:9703"/>
        <dbReference type="ChEBI" id="CHEBI:15378"/>
        <dbReference type="ChEBI" id="CHEBI:30616"/>
        <dbReference type="ChEBI" id="CHEBI:33019"/>
        <dbReference type="ChEBI" id="CHEBI:33384"/>
        <dbReference type="ChEBI" id="CHEBI:78442"/>
        <dbReference type="ChEBI" id="CHEBI:78533"/>
        <dbReference type="ChEBI" id="CHEBI:456215"/>
        <dbReference type="EC" id="6.1.1.11"/>
    </reaction>
</comment>
<comment type="catalytic activity">
    <reaction evidence="1">
        <text>tRNA(Sec) + L-serine + ATP = L-seryl-tRNA(Sec) + AMP + diphosphate + H(+)</text>
        <dbReference type="Rhea" id="RHEA:42580"/>
        <dbReference type="Rhea" id="RHEA-COMP:9742"/>
        <dbReference type="Rhea" id="RHEA-COMP:10128"/>
        <dbReference type="ChEBI" id="CHEBI:15378"/>
        <dbReference type="ChEBI" id="CHEBI:30616"/>
        <dbReference type="ChEBI" id="CHEBI:33019"/>
        <dbReference type="ChEBI" id="CHEBI:33384"/>
        <dbReference type="ChEBI" id="CHEBI:78442"/>
        <dbReference type="ChEBI" id="CHEBI:78533"/>
        <dbReference type="ChEBI" id="CHEBI:456215"/>
        <dbReference type="EC" id="6.1.1.11"/>
    </reaction>
</comment>
<comment type="pathway">
    <text evidence="1">Aminoacyl-tRNA biosynthesis; selenocysteinyl-tRNA(Sec) biosynthesis; L-seryl-tRNA(Sec) from L-serine and tRNA(Sec): step 1/1.</text>
</comment>
<comment type="subunit">
    <text evidence="1">Homodimer. The tRNA molecule binds across the dimer.</text>
</comment>
<comment type="subcellular location">
    <subcellularLocation>
        <location evidence="1">Cytoplasm</location>
    </subcellularLocation>
</comment>
<comment type="domain">
    <text evidence="1">Consists of two distinct domains, a catalytic core and a N-terminal extension that is involved in tRNA binding.</text>
</comment>
<comment type="similarity">
    <text evidence="1">Belongs to the class-II aminoacyl-tRNA synthetase family. Type-1 seryl-tRNA synthetase subfamily.</text>
</comment>
<gene>
    <name evidence="1" type="primary">serS</name>
    <name type="ordered locus">Arad_2130</name>
</gene>
<keyword id="KW-0030">Aminoacyl-tRNA synthetase</keyword>
<keyword id="KW-0067">ATP-binding</keyword>
<keyword id="KW-0963">Cytoplasm</keyword>
<keyword id="KW-0436">Ligase</keyword>
<keyword id="KW-0547">Nucleotide-binding</keyword>
<keyword id="KW-0648">Protein biosynthesis</keyword>
<evidence type="ECO:0000255" key="1">
    <source>
        <dbReference type="HAMAP-Rule" id="MF_00176"/>
    </source>
</evidence>
<accession>B9JEH1</accession>
<organism>
    <name type="scientific">Rhizobium rhizogenes (strain K84 / ATCC BAA-868)</name>
    <name type="common">Agrobacterium radiobacter</name>
    <dbReference type="NCBI Taxonomy" id="311403"/>
    <lineage>
        <taxon>Bacteria</taxon>
        <taxon>Pseudomonadati</taxon>
        <taxon>Pseudomonadota</taxon>
        <taxon>Alphaproteobacteria</taxon>
        <taxon>Hyphomicrobiales</taxon>
        <taxon>Rhizobiaceae</taxon>
        <taxon>Rhizobium/Agrobacterium group</taxon>
        <taxon>Rhizobium</taxon>
    </lineage>
</organism>
<reference key="1">
    <citation type="journal article" date="2009" name="J. Bacteriol.">
        <title>Genome sequences of three Agrobacterium biovars help elucidate the evolution of multichromosome genomes in bacteria.</title>
        <authorList>
            <person name="Slater S.C."/>
            <person name="Goldman B.S."/>
            <person name="Goodner B."/>
            <person name="Setubal J.C."/>
            <person name="Farrand S.K."/>
            <person name="Nester E.W."/>
            <person name="Burr T.J."/>
            <person name="Banta L."/>
            <person name="Dickerman A.W."/>
            <person name="Paulsen I."/>
            <person name="Otten L."/>
            <person name="Suen G."/>
            <person name="Welch R."/>
            <person name="Almeida N.F."/>
            <person name="Arnold F."/>
            <person name="Burton O.T."/>
            <person name="Du Z."/>
            <person name="Ewing A."/>
            <person name="Godsy E."/>
            <person name="Heisel S."/>
            <person name="Houmiel K.L."/>
            <person name="Jhaveri J."/>
            <person name="Lu J."/>
            <person name="Miller N.M."/>
            <person name="Norton S."/>
            <person name="Chen Q."/>
            <person name="Phoolcharoen W."/>
            <person name="Ohlin V."/>
            <person name="Ondrusek D."/>
            <person name="Pride N."/>
            <person name="Stricklin S.L."/>
            <person name="Sun J."/>
            <person name="Wheeler C."/>
            <person name="Wilson L."/>
            <person name="Zhu H."/>
            <person name="Wood D.W."/>
        </authorList>
    </citation>
    <scope>NUCLEOTIDE SEQUENCE [LARGE SCALE GENOMIC DNA]</scope>
    <source>
        <strain>K84 / ATCC BAA-868</strain>
    </source>
</reference>